<accession>Q7V8G9</accession>
<name>OTC_PROMM</name>
<feature type="chain" id="PRO_0000112983" description="Ornithine carbamoyltransferase">
    <location>
        <begin position="1"/>
        <end position="318"/>
    </location>
</feature>
<feature type="binding site" evidence="2">
    <location>
        <begin position="63"/>
        <end position="66"/>
    </location>
    <ligand>
        <name>carbamoyl phosphate</name>
        <dbReference type="ChEBI" id="CHEBI:58228"/>
    </ligand>
</feature>
<feature type="binding site" evidence="2">
    <location>
        <position position="90"/>
    </location>
    <ligand>
        <name>carbamoyl phosphate</name>
        <dbReference type="ChEBI" id="CHEBI:58228"/>
    </ligand>
</feature>
<feature type="binding site" evidence="2">
    <location>
        <position position="114"/>
    </location>
    <ligand>
        <name>carbamoyl phosphate</name>
        <dbReference type="ChEBI" id="CHEBI:58228"/>
    </ligand>
</feature>
<feature type="binding site" evidence="2">
    <location>
        <begin position="141"/>
        <end position="144"/>
    </location>
    <ligand>
        <name>carbamoyl phosphate</name>
        <dbReference type="ChEBI" id="CHEBI:58228"/>
    </ligand>
</feature>
<feature type="binding site" evidence="2">
    <location>
        <position position="172"/>
    </location>
    <ligand>
        <name>L-ornithine</name>
        <dbReference type="ChEBI" id="CHEBI:46911"/>
    </ligand>
</feature>
<feature type="binding site" evidence="2">
    <location>
        <position position="235"/>
    </location>
    <ligand>
        <name>L-ornithine</name>
        <dbReference type="ChEBI" id="CHEBI:46911"/>
    </ligand>
</feature>
<feature type="binding site" evidence="2">
    <location>
        <begin position="239"/>
        <end position="240"/>
    </location>
    <ligand>
        <name>L-ornithine</name>
        <dbReference type="ChEBI" id="CHEBI:46911"/>
    </ligand>
</feature>
<feature type="binding site" evidence="2">
    <location>
        <begin position="275"/>
        <end position="276"/>
    </location>
    <ligand>
        <name>carbamoyl phosphate</name>
        <dbReference type="ChEBI" id="CHEBI:58228"/>
    </ligand>
</feature>
<feature type="binding site" evidence="2">
    <location>
        <position position="303"/>
    </location>
    <ligand>
        <name>carbamoyl phosphate</name>
        <dbReference type="ChEBI" id="CHEBI:58228"/>
    </ligand>
</feature>
<comment type="function">
    <text evidence="1">Reversibly catalyzes the transfer of the carbamoyl group from carbamoyl phosphate (CP) to the N(epsilon) atom of ornithine (ORN) to produce L-citrulline.</text>
</comment>
<comment type="catalytic activity">
    <reaction evidence="2">
        <text>carbamoyl phosphate + L-ornithine = L-citrulline + phosphate + H(+)</text>
        <dbReference type="Rhea" id="RHEA:19513"/>
        <dbReference type="ChEBI" id="CHEBI:15378"/>
        <dbReference type="ChEBI" id="CHEBI:43474"/>
        <dbReference type="ChEBI" id="CHEBI:46911"/>
        <dbReference type="ChEBI" id="CHEBI:57743"/>
        <dbReference type="ChEBI" id="CHEBI:58228"/>
        <dbReference type="EC" id="2.1.3.3"/>
    </reaction>
</comment>
<comment type="pathway">
    <text evidence="2">Amino-acid biosynthesis; L-arginine biosynthesis; L-arginine from L-ornithine and carbamoyl phosphate: step 1/3.</text>
</comment>
<comment type="subcellular location">
    <subcellularLocation>
        <location evidence="2">Cytoplasm</location>
    </subcellularLocation>
</comment>
<comment type="similarity">
    <text evidence="2">Belongs to the aspartate/ornithine carbamoyltransferase superfamily. OTCase family.</text>
</comment>
<keyword id="KW-0028">Amino-acid biosynthesis</keyword>
<keyword id="KW-0055">Arginine biosynthesis</keyword>
<keyword id="KW-0963">Cytoplasm</keyword>
<keyword id="KW-1185">Reference proteome</keyword>
<keyword id="KW-0808">Transferase</keyword>
<proteinExistence type="inferred from homology"/>
<evidence type="ECO:0000250" key="1"/>
<evidence type="ECO:0000255" key="2">
    <source>
        <dbReference type="HAMAP-Rule" id="MF_01109"/>
    </source>
</evidence>
<gene>
    <name evidence="2" type="primary">argF</name>
    <name type="ordered locus">PMT_0379</name>
</gene>
<organism>
    <name type="scientific">Prochlorococcus marinus (strain MIT 9313)</name>
    <dbReference type="NCBI Taxonomy" id="74547"/>
    <lineage>
        <taxon>Bacteria</taxon>
        <taxon>Bacillati</taxon>
        <taxon>Cyanobacteriota</taxon>
        <taxon>Cyanophyceae</taxon>
        <taxon>Synechococcales</taxon>
        <taxon>Prochlorococcaceae</taxon>
        <taxon>Prochlorococcus</taxon>
    </lineage>
</organism>
<reference key="1">
    <citation type="journal article" date="2003" name="Nature">
        <title>Genome divergence in two Prochlorococcus ecotypes reflects oceanic niche differentiation.</title>
        <authorList>
            <person name="Rocap G."/>
            <person name="Larimer F.W."/>
            <person name="Lamerdin J.E."/>
            <person name="Malfatti S."/>
            <person name="Chain P."/>
            <person name="Ahlgren N.A."/>
            <person name="Arellano A."/>
            <person name="Coleman M."/>
            <person name="Hauser L."/>
            <person name="Hess W.R."/>
            <person name="Johnson Z.I."/>
            <person name="Land M.L."/>
            <person name="Lindell D."/>
            <person name="Post A.F."/>
            <person name="Regala W."/>
            <person name="Shah M."/>
            <person name="Shaw S.L."/>
            <person name="Steglich C."/>
            <person name="Sullivan M.B."/>
            <person name="Ting C.S."/>
            <person name="Tolonen A."/>
            <person name="Webb E.A."/>
            <person name="Zinser E.R."/>
            <person name="Chisholm S.W."/>
        </authorList>
    </citation>
    <scope>NUCLEOTIDE SEQUENCE [LARGE SCALE GENOMIC DNA]</scope>
    <source>
        <strain>MIT 9313</strain>
    </source>
</reference>
<protein>
    <recommendedName>
        <fullName evidence="2">Ornithine carbamoyltransferase</fullName>
        <shortName evidence="2">OTCase</shortName>
        <ecNumber evidence="2">2.1.3.3</ecNumber>
    </recommendedName>
</protein>
<sequence length="318" mass="34390">MAVNPQGVAAVLADLKGRDFLSCADFTAEQTVALLELSRQLKSGDRRIDLGNRVLGLIFTKASTRTRVSFQVAMARLGGQTVDLNPQVTQLGRGEPLEDTARVLSRFCDVMAVRTFAQQELLDYAHWASIPVLNALTDLEHPCQAMADFLTIQEALGSLTGQTLAYVGDGNNVSHSLMLCGALLGVNVRIGCPQGFEPLPEVIDQARNLAVADARIEVMTDPVDAVRGAQALYTDVWASMGQEQEQSQREEAFRGFCLNEDLLAHADPNAIVLHCLPAHRGEEISSGVMEGEASRIFDQAENRLHVQQALLAAVLGGL</sequence>
<dbReference type="EC" id="2.1.3.3" evidence="2"/>
<dbReference type="EMBL" id="BX548175">
    <property type="protein sequence ID" value="CAE20554.1"/>
    <property type="molecule type" value="Genomic_DNA"/>
</dbReference>
<dbReference type="RefSeq" id="WP_011129758.1">
    <property type="nucleotide sequence ID" value="NC_005071.1"/>
</dbReference>
<dbReference type="SMR" id="Q7V8G9"/>
<dbReference type="KEGG" id="pmt:PMT_0379"/>
<dbReference type="eggNOG" id="COG0078">
    <property type="taxonomic scope" value="Bacteria"/>
</dbReference>
<dbReference type="HOGENOM" id="CLU_043846_3_2_3"/>
<dbReference type="OrthoDB" id="9802587at2"/>
<dbReference type="UniPathway" id="UPA00068">
    <property type="reaction ID" value="UER00112"/>
</dbReference>
<dbReference type="Proteomes" id="UP000001423">
    <property type="component" value="Chromosome"/>
</dbReference>
<dbReference type="GO" id="GO:0005737">
    <property type="term" value="C:cytoplasm"/>
    <property type="evidence" value="ECO:0007669"/>
    <property type="project" value="UniProtKB-SubCell"/>
</dbReference>
<dbReference type="GO" id="GO:0016597">
    <property type="term" value="F:amino acid binding"/>
    <property type="evidence" value="ECO:0007669"/>
    <property type="project" value="InterPro"/>
</dbReference>
<dbReference type="GO" id="GO:0004585">
    <property type="term" value="F:ornithine carbamoyltransferase activity"/>
    <property type="evidence" value="ECO:0007669"/>
    <property type="project" value="UniProtKB-UniRule"/>
</dbReference>
<dbReference type="GO" id="GO:0042450">
    <property type="term" value="P:arginine biosynthetic process via ornithine"/>
    <property type="evidence" value="ECO:0007669"/>
    <property type="project" value="TreeGrafter"/>
</dbReference>
<dbReference type="GO" id="GO:0019240">
    <property type="term" value="P:citrulline biosynthetic process"/>
    <property type="evidence" value="ECO:0007669"/>
    <property type="project" value="TreeGrafter"/>
</dbReference>
<dbReference type="GO" id="GO:0006526">
    <property type="term" value="P:L-arginine biosynthetic process"/>
    <property type="evidence" value="ECO:0007669"/>
    <property type="project" value="UniProtKB-UniRule"/>
</dbReference>
<dbReference type="FunFam" id="3.40.50.1370:FF:000008">
    <property type="entry name" value="Ornithine carbamoyltransferase"/>
    <property type="match status" value="1"/>
</dbReference>
<dbReference type="Gene3D" id="3.40.50.1370">
    <property type="entry name" value="Aspartate/ornithine carbamoyltransferase"/>
    <property type="match status" value="2"/>
</dbReference>
<dbReference type="HAMAP" id="MF_01109">
    <property type="entry name" value="OTCase"/>
    <property type="match status" value="1"/>
</dbReference>
<dbReference type="InterPro" id="IPR006132">
    <property type="entry name" value="Asp/Orn_carbamoyltranf_P-bd"/>
</dbReference>
<dbReference type="InterPro" id="IPR006130">
    <property type="entry name" value="Asp/Orn_carbamoylTrfase"/>
</dbReference>
<dbReference type="InterPro" id="IPR036901">
    <property type="entry name" value="Asp/Orn_carbamoylTrfase_sf"/>
</dbReference>
<dbReference type="InterPro" id="IPR006131">
    <property type="entry name" value="Asp_carbamoyltransf_Asp/Orn-bd"/>
</dbReference>
<dbReference type="InterPro" id="IPR002292">
    <property type="entry name" value="Orn/put_carbamltrans"/>
</dbReference>
<dbReference type="InterPro" id="IPR024904">
    <property type="entry name" value="OTCase_ArgI"/>
</dbReference>
<dbReference type="NCBIfam" id="TIGR00658">
    <property type="entry name" value="orni_carb_tr"/>
    <property type="match status" value="1"/>
</dbReference>
<dbReference type="NCBIfam" id="NF001986">
    <property type="entry name" value="PRK00779.1"/>
    <property type="match status" value="1"/>
</dbReference>
<dbReference type="PANTHER" id="PTHR45753">
    <property type="entry name" value="ORNITHINE CARBAMOYLTRANSFERASE, MITOCHONDRIAL"/>
    <property type="match status" value="1"/>
</dbReference>
<dbReference type="PANTHER" id="PTHR45753:SF3">
    <property type="entry name" value="ORNITHINE TRANSCARBAMYLASE, MITOCHONDRIAL"/>
    <property type="match status" value="1"/>
</dbReference>
<dbReference type="Pfam" id="PF00185">
    <property type="entry name" value="OTCace"/>
    <property type="match status" value="1"/>
</dbReference>
<dbReference type="Pfam" id="PF02729">
    <property type="entry name" value="OTCace_N"/>
    <property type="match status" value="1"/>
</dbReference>
<dbReference type="PRINTS" id="PR00100">
    <property type="entry name" value="AOTCASE"/>
</dbReference>
<dbReference type="PRINTS" id="PR00102">
    <property type="entry name" value="OTCASE"/>
</dbReference>
<dbReference type="SUPFAM" id="SSF53671">
    <property type="entry name" value="Aspartate/ornithine carbamoyltransferase"/>
    <property type="match status" value="1"/>
</dbReference>
<dbReference type="PROSITE" id="PS00097">
    <property type="entry name" value="CARBAMOYLTRANSFERASE"/>
    <property type="match status" value="1"/>
</dbReference>